<comment type="function">
    <text evidence="1">Involved in the binding of tRNA to the ribosomes.</text>
</comment>
<comment type="subunit">
    <text evidence="1">Part of the 30S ribosomal subunit.</text>
</comment>
<comment type="similarity">
    <text evidence="1">Belongs to the universal ribosomal protein uS10 family.</text>
</comment>
<dbReference type="EMBL" id="CT971583">
    <property type="protein sequence ID" value="CAK22804.1"/>
    <property type="molecule type" value="Genomic_DNA"/>
</dbReference>
<dbReference type="SMR" id="A5GIN9"/>
<dbReference type="STRING" id="32051.SynWH7803_0378"/>
<dbReference type="KEGG" id="syx:SynWH7803_0378"/>
<dbReference type="eggNOG" id="COG0051">
    <property type="taxonomic scope" value="Bacteria"/>
</dbReference>
<dbReference type="HOGENOM" id="CLU_122625_1_3_3"/>
<dbReference type="OrthoDB" id="9804464at2"/>
<dbReference type="Proteomes" id="UP000001566">
    <property type="component" value="Chromosome"/>
</dbReference>
<dbReference type="GO" id="GO:1990904">
    <property type="term" value="C:ribonucleoprotein complex"/>
    <property type="evidence" value="ECO:0007669"/>
    <property type="project" value="UniProtKB-KW"/>
</dbReference>
<dbReference type="GO" id="GO:0005840">
    <property type="term" value="C:ribosome"/>
    <property type="evidence" value="ECO:0007669"/>
    <property type="project" value="UniProtKB-KW"/>
</dbReference>
<dbReference type="GO" id="GO:0003735">
    <property type="term" value="F:structural constituent of ribosome"/>
    <property type="evidence" value="ECO:0007669"/>
    <property type="project" value="InterPro"/>
</dbReference>
<dbReference type="GO" id="GO:0000049">
    <property type="term" value="F:tRNA binding"/>
    <property type="evidence" value="ECO:0007669"/>
    <property type="project" value="UniProtKB-UniRule"/>
</dbReference>
<dbReference type="GO" id="GO:0006412">
    <property type="term" value="P:translation"/>
    <property type="evidence" value="ECO:0007669"/>
    <property type="project" value="UniProtKB-UniRule"/>
</dbReference>
<dbReference type="FunFam" id="3.30.70.600:FF:000001">
    <property type="entry name" value="30S ribosomal protein S10"/>
    <property type="match status" value="1"/>
</dbReference>
<dbReference type="Gene3D" id="3.30.70.600">
    <property type="entry name" value="Ribosomal protein S10 domain"/>
    <property type="match status" value="1"/>
</dbReference>
<dbReference type="HAMAP" id="MF_00508">
    <property type="entry name" value="Ribosomal_uS10"/>
    <property type="match status" value="1"/>
</dbReference>
<dbReference type="InterPro" id="IPR001848">
    <property type="entry name" value="Ribosomal_uS10"/>
</dbReference>
<dbReference type="InterPro" id="IPR027486">
    <property type="entry name" value="Ribosomal_uS10_dom"/>
</dbReference>
<dbReference type="InterPro" id="IPR036838">
    <property type="entry name" value="Ribosomal_uS10_dom_sf"/>
</dbReference>
<dbReference type="NCBIfam" id="NF001861">
    <property type="entry name" value="PRK00596.1"/>
    <property type="match status" value="1"/>
</dbReference>
<dbReference type="NCBIfam" id="TIGR01049">
    <property type="entry name" value="rpsJ_bact"/>
    <property type="match status" value="1"/>
</dbReference>
<dbReference type="PANTHER" id="PTHR11700">
    <property type="entry name" value="30S RIBOSOMAL PROTEIN S10 FAMILY MEMBER"/>
    <property type="match status" value="1"/>
</dbReference>
<dbReference type="Pfam" id="PF00338">
    <property type="entry name" value="Ribosomal_S10"/>
    <property type="match status" value="1"/>
</dbReference>
<dbReference type="PRINTS" id="PR00971">
    <property type="entry name" value="RIBOSOMALS10"/>
</dbReference>
<dbReference type="SMART" id="SM01403">
    <property type="entry name" value="Ribosomal_S10"/>
    <property type="match status" value="1"/>
</dbReference>
<dbReference type="SUPFAM" id="SSF54999">
    <property type="entry name" value="Ribosomal protein S10"/>
    <property type="match status" value="1"/>
</dbReference>
<name>RS10_SYNPW</name>
<reference key="1">
    <citation type="submission" date="2006-05" db="EMBL/GenBank/DDBJ databases">
        <authorList>
            <consortium name="Genoscope"/>
        </authorList>
    </citation>
    <scope>NUCLEOTIDE SEQUENCE [LARGE SCALE GENOMIC DNA]</scope>
    <source>
        <strain>WH7803</strain>
    </source>
</reference>
<gene>
    <name evidence="1" type="primary">rpsJ</name>
    <name evidence="1" type="synonym">rps10</name>
    <name type="ordered locus">SynWH7803_0378</name>
</gene>
<organism>
    <name type="scientific">Synechococcus sp. (strain WH7803)</name>
    <dbReference type="NCBI Taxonomy" id="32051"/>
    <lineage>
        <taxon>Bacteria</taxon>
        <taxon>Bacillati</taxon>
        <taxon>Cyanobacteriota</taxon>
        <taxon>Cyanophyceae</taxon>
        <taxon>Synechococcales</taxon>
        <taxon>Synechococcaceae</taxon>
        <taxon>Synechococcus</taxon>
    </lineage>
</organism>
<sequence>MSTAIAQQKIRIRLKAFDRRMLDLSCDKIIETADTTAATAIGPIPLPTKRKIYCVLRSPHVDKDSREHFETRTHRRIIDIYSPSAKTIDALMKLDLPSGVDIEVKL</sequence>
<evidence type="ECO:0000255" key="1">
    <source>
        <dbReference type="HAMAP-Rule" id="MF_00508"/>
    </source>
</evidence>
<evidence type="ECO:0000305" key="2"/>
<feature type="chain" id="PRO_1000015127" description="Small ribosomal subunit protein uS10">
    <location>
        <begin position="1"/>
        <end position="106"/>
    </location>
</feature>
<proteinExistence type="inferred from homology"/>
<keyword id="KW-1185">Reference proteome</keyword>
<keyword id="KW-0687">Ribonucleoprotein</keyword>
<keyword id="KW-0689">Ribosomal protein</keyword>
<accession>A5GIN9</accession>
<protein>
    <recommendedName>
        <fullName evidence="1">Small ribosomal subunit protein uS10</fullName>
    </recommendedName>
    <alternativeName>
        <fullName evidence="2">30S ribosomal protein S10</fullName>
    </alternativeName>
</protein>